<keyword id="KW-0648">Protein biosynthesis</keyword>
<keyword id="KW-1185">Reference proteome</keyword>
<keyword id="KW-0810">Translation regulation</keyword>
<sequence length="97" mass="10748">MSEVCSTCGLPEELCVCEDVAKESQEINIRIDERRYGKEVTIIEGFDPKDVDMDSLSSDLKSKFACGGTVEDGQIELQGNHTGRVEDFLRDKGFNVA</sequence>
<reference key="1">
    <citation type="journal article" date="2004" name="Genome Res.">
        <title>Genome sequence of Haloarcula marismortui: a halophilic archaeon from the Dead Sea.</title>
        <authorList>
            <person name="Baliga N.S."/>
            <person name="Bonneau R."/>
            <person name="Facciotti M.T."/>
            <person name="Pan M."/>
            <person name="Glusman G."/>
            <person name="Deutsch E.W."/>
            <person name="Shannon P."/>
            <person name="Chiu Y."/>
            <person name="Weng R.S."/>
            <person name="Gan R.R."/>
            <person name="Hung P."/>
            <person name="Date S.V."/>
            <person name="Marcotte E."/>
            <person name="Hood L."/>
            <person name="Ng W.V."/>
        </authorList>
    </citation>
    <scope>NUCLEOTIDE SEQUENCE [LARGE SCALE GENOMIC DNA]</scope>
    <source>
        <strain>ATCC 43049 / DSM 3752 / JCM 8966 / VKM B-1809</strain>
    </source>
</reference>
<evidence type="ECO:0000255" key="1">
    <source>
        <dbReference type="HAMAP-Rule" id="MF_00604"/>
    </source>
</evidence>
<comment type="similarity">
    <text evidence="1">Belongs to the SUI1 family.</text>
</comment>
<protein>
    <recommendedName>
        <fullName evidence="1">Protein translation factor SUI1 homolog</fullName>
    </recommendedName>
</protein>
<feature type="chain" id="PRO_0000130577" description="Protein translation factor SUI1 homolog">
    <location>
        <begin position="1"/>
        <end position="97"/>
    </location>
</feature>
<dbReference type="EMBL" id="AY596297">
    <property type="protein sequence ID" value="AAV47254.1"/>
    <property type="molecule type" value="Genomic_DNA"/>
</dbReference>
<dbReference type="SMR" id="Q5UZP9"/>
<dbReference type="STRING" id="272569.rrnAC2445"/>
<dbReference type="PaxDb" id="272569-rrnAC2445"/>
<dbReference type="EnsemblBacteria" id="AAV47254">
    <property type="protein sequence ID" value="AAV47254"/>
    <property type="gene ID" value="rrnAC2445"/>
</dbReference>
<dbReference type="KEGG" id="hma:rrnAC2445"/>
<dbReference type="PATRIC" id="fig|272569.17.peg.3058"/>
<dbReference type="eggNOG" id="arCOG04223">
    <property type="taxonomic scope" value="Archaea"/>
</dbReference>
<dbReference type="HOGENOM" id="CLU_082805_6_1_2"/>
<dbReference type="Proteomes" id="UP000001169">
    <property type="component" value="Chromosome I"/>
</dbReference>
<dbReference type="GO" id="GO:0003729">
    <property type="term" value="F:mRNA binding"/>
    <property type="evidence" value="ECO:0007669"/>
    <property type="project" value="TreeGrafter"/>
</dbReference>
<dbReference type="GO" id="GO:0003743">
    <property type="term" value="F:translation initiation factor activity"/>
    <property type="evidence" value="ECO:0007669"/>
    <property type="project" value="InterPro"/>
</dbReference>
<dbReference type="GO" id="GO:0001731">
    <property type="term" value="P:formation of translation preinitiation complex"/>
    <property type="evidence" value="ECO:0007669"/>
    <property type="project" value="TreeGrafter"/>
</dbReference>
<dbReference type="GO" id="GO:0006417">
    <property type="term" value="P:regulation of translation"/>
    <property type="evidence" value="ECO:0007669"/>
    <property type="project" value="UniProtKB-UniRule"/>
</dbReference>
<dbReference type="GO" id="GO:0002188">
    <property type="term" value="P:translation reinitiation"/>
    <property type="evidence" value="ECO:0007669"/>
    <property type="project" value="TreeGrafter"/>
</dbReference>
<dbReference type="CDD" id="cd11567">
    <property type="entry name" value="YciH_like"/>
    <property type="match status" value="1"/>
</dbReference>
<dbReference type="FunFam" id="3.30.780.10:FF:000006">
    <property type="entry name" value="Protein translation factor SUI1 homolog"/>
    <property type="match status" value="1"/>
</dbReference>
<dbReference type="Gene3D" id="3.30.780.10">
    <property type="entry name" value="SUI1-like domain"/>
    <property type="match status" value="1"/>
</dbReference>
<dbReference type="HAMAP" id="MF_00604">
    <property type="entry name" value="SUI1"/>
    <property type="match status" value="1"/>
</dbReference>
<dbReference type="InterPro" id="IPR050318">
    <property type="entry name" value="DENR/SUI1_TIF"/>
</dbReference>
<dbReference type="InterPro" id="IPR001950">
    <property type="entry name" value="SUI1"/>
</dbReference>
<dbReference type="InterPro" id="IPR022851">
    <property type="entry name" value="SUI1_arc"/>
</dbReference>
<dbReference type="InterPro" id="IPR005872">
    <property type="entry name" value="SUI1_arc_bac"/>
</dbReference>
<dbReference type="InterPro" id="IPR036877">
    <property type="entry name" value="SUI1_dom_sf"/>
</dbReference>
<dbReference type="NCBIfam" id="NF002096">
    <property type="entry name" value="PRK00939.1"/>
    <property type="match status" value="1"/>
</dbReference>
<dbReference type="NCBIfam" id="TIGR01158">
    <property type="entry name" value="SUI1_rel"/>
    <property type="match status" value="1"/>
</dbReference>
<dbReference type="PANTHER" id="PTHR12789:SF0">
    <property type="entry name" value="DENSITY-REGULATED PROTEIN"/>
    <property type="match status" value="1"/>
</dbReference>
<dbReference type="PANTHER" id="PTHR12789">
    <property type="entry name" value="DENSITY-REGULATED PROTEIN HOMOLOG"/>
    <property type="match status" value="1"/>
</dbReference>
<dbReference type="Pfam" id="PF01253">
    <property type="entry name" value="SUI1"/>
    <property type="match status" value="1"/>
</dbReference>
<dbReference type="PIRSF" id="PIRSF037511">
    <property type="entry name" value="Transl_init_SUI1_pro"/>
    <property type="match status" value="1"/>
</dbReference>
<dbReference type="SUPFAM" id="SSF55159">
    <property type="entry name" value="eIF1-like"/>
    <property type="match status" value="1"/>
</dbReference>
<dbReference type="PROSITE" id="PS50296">
    <property type="entry name" value="SUI1"/>
    <property type="match status" value="1"/>
</dbReference>
<name>SUI1_HALMA</name>
<organism>
    <name type="scientific">Haloarcula marismortui (strain ATCC 43049 / DSM 3752 / JCM 8966 / VKM B-1809)</name>
    <name type="common">Halobacterium marismortui</name>
    <dbReference type="NCBI Taxonomy" id="272569"/>
    <lineage>
        <taxon>Archaea</taxon>
        <taxon>Methanobacteriati</taxon>
        <taxon>Methanobacteriota</taxon>
        <taxon>Stenosarchaea group</taxon>
        <taxon>Halobacteria</taxon>
        <taxon>Halobacteriales</taxon>
        <taxon>Haloarculaceae</taxon>
        <taxon>Haloarcula</taxon>
    </lineage>
</organism>
<gene>
    <name type="primary">sui1</name>
    <name type="ordered locus">rrnAC2445</name>
</gene>
<proteinExistence type="inferred from homology"/>
<accession>Q5UZP9</accession>